<gene>
    <name evidence="1" type="primary">mnmE</name>
    <name evidence="1" type="synonym">trmE</name>
    <name type="ordered locus">Ccur92_11290</name>
    <name type="ORF">CCV52592_1833</name>
</gene>
<comment type="function">
    <text evidence="1">Exhibits a very high intrinsic GTPase hydrolysis rate. Involved in the addition of a carboxymethylaminomethyl (cmnm) group at the wobble position (U34) of certain tRNAs, forming tRNA-cmnm(5)s(2)U34.</text>
</comment>
<comment type="cofactor">
    <cofactor evidence="1">
        <name>K(+)</name>
        <dbReference type="ChEBI" id="CHEBI:29103"/>
    </cofactor>
    <text evidence="1">Binds 1 potassium ion per subunit.</text>
</comment>
<comment type="subunit">
    <text evidence="1">Homodimer. Heterotetramer of two MnmE and two MnmG subunits.</text>
</comment>
<comment type="subcellular location">
    <subcellularLocation>
        <location evidence="1">Cytoplasm</location>
    </subcellularLocation>
</comment>
<comment type="similarity">
    <text evidence="1">Belongs to the TRAFAC class TrmE-Era-EngA-EngB-Septin-like GTPase superfamily. TrmE GTPase family.</text>
</comment>
<keyword id="KW-0963">Cytoplasm</keyword>
<keyword id="KW-0342">GTP-binding</keyword>
<keyword id="KW-0378">Hydrolase</keyword>
<keyword id="KW-0460">Magnesium</keyword>
<keyword id="KW-0479">Metal-binding</keyword>
<keyword id="KW-0547">Nucleotide-binding</keyword>
<keyword id="KW-0630">Potassium</keyword>
<keyword id="KW-1185">Reference proteome</keyword>
<keyword id="KW-0819">tRNA processing</keyword>
<proteinExistence type="inferred from homology"/>
<organism>
    <name type="scientific">Campylobacter curvus (strain 525.92)</name>
    <dbReference type="NCBI Taxonomy" id="360105"/>
    <lineage>
        <taxon>Bacteria</taxon>
        <taxon>Pseudomonadati</taxon>
        <taxon>Campylobacterota</taxon>
        <taxon>Epsilonproteobacteria</taxon>
        <taxon>Campylobacterales</taxon>
        <taxon>Campylobacteraceae</taxon>
        <taxon>Campylobacter</taxon>
    </lineage>
</organism>
<reference key="1">
    <citation type="submission" date="2007-07" db="EMBL/GenBank/DDBJ databases">
        <title>Genome sequence of Campylobacter curvus 525.92 isolated from human feces.</title>
        <authorList>
            <person name="Fouts D.E."/>
            <person name="Mongodin E.F."/>
            <person name="Puiu D."/>
            <person name="Sebastian Y."/>
            <person name="Miller W.G."/>
            <person name="Mandrell R.E."/>
            <person name="Lastovica A.J."/>
            <person name="Nelson K.E."/>
        </authorList>
    </citation>
    <scope>NUCLEOTIDE SEQUENCE [LARGE SCALE GENOMIC DNA]</scope>
    <source>
        <strain>525.92</strain>
    </source>
</reference>
<name>MNME_CAMC5</name>
<accession>A7GYZ1</accession>
<feature type="chain" id="PRO_0000345753" description="tRNA modification GTPase MnmE">
    <location>
        <begin position="1"/>
        <end position="444"/>
    </location>
</feature>
<feature type="domain" description="TrmE-type G">
    <location>
        <begin position="218"/>
        <end position="370"/>
    </location>
</feature>
<feature type="binding site" evidence="1">
    <location>
        <position position="25"/>
    </location>
    <ligand>
        <name>(6S)-5-formyl-5,6,7,8-tetrahydrofolate</name>
        <dbReference type="ChEBI" id="CHEBI:57457"/>
    </ligand>
</feature>
<feature type="binding site" evidence="1">
    <location>
        <position position="83"/>
    </location>
    <ligand>
        <name>(6S)-5-formyl-5,6,7,8-tetrahydrofolate</name>
        <dbReference type="ChEBI" id="CHEBI:57457"/>
    </ligand>
</feature>
<feature type="binding site" evidence="1">
    <location>
        <position position="122"/>
    </location>
    <ligand>
        <name>(6S)-5-formyl-5,6,7,8-tetrahydrofolate</name>
        <dbReference type="ChEBI" id="CHEBI:57457"/>
    </ligand>
</feature>
<feature type="binding site" evidence="1">
    <location>
        <begin position="228"/>
        <end position="233"/>
    </location>
    <ligand>
        <name>GTP</name>
        <dbReference type="ChEBI" id="CHEBI:37565"/>
    </ligand>
</feature>
<feature type="binding site" evidence="1">
    <location>
        <position position="232"/>
    </location>
    <ligand>
        <name>Mg(2+)</name>
        <dbReference type="ChEBI" id="CHEBI:18420"/>
    </ligand>
</feature>
<feature type="binding site" evidence="1">
    <location>
        <begin position="247"/>
        <end position="253"/>
    </location>
    <ligand>
        <name>GTP</name>
        <dbReference type="ChEBI" id="CHEBI:37565"/>
    </ligand>
</feature>
<feature type="binding site" evidence="1">
    <location>
        <position position="253"/>
    </location>
    <ligand>
        <name>Mg(2+)</name>
        <dbReference type="ChEBI" id="CHEBI:18420"/>
    </ligand>
</feature>
<feature type="binding site" evidence="1">
    <location>
        <begin position="272"/>
        <end position="275"/>
    </location>
    <ligand>
        <name>GTP</name>
        <dbReference type="ChEBI" id="CHEBI:37565"/>
    </ligand>
</feature>
<feature type="binding site" evidence="1">
    <location>
        <position position="444"/>
    </location>
    <ligand>
        <name>(6S)-5-formyl-5,6,7,8-tetrahydrofolate</name>
        <dbReference type="ChEBI" id="CHEBI:57457"/>
    </ligand>
</feature>
<dbReference type="EC" id="3.6.-.-" evidence="1"/>
<dbReference type="EMBL" id="CP000767">
    <property type="protein sequence ID" value="EAU00286.1"/>
    <property type="molecule type" value="Genomic_DNA"/>
</dbReference>
<dbReference type="RefSeq" id="WP_011992390.1">
    <property type="nucleotide sequence ID" value="NC_009715.2"/>
</dbReference>
<dbReference type="SMR" id="A7GYZ1"/>
<dbReference type="STRING" id="360105.CCV52592_1833"/>
<dbReference type="KEGG" id="ccv:CCV52592_1833"/>
<dbReference type="HOGENOM" id="CLU_019624_4_1_7"/>
<dbReference type="OrthoDB" id="9805918at2"/>
<dbReference type="Proteomes" id="UP000006380">
    <property type="component" value="Chromosome"/>
</dbReference>
<dbReference type="GO" id="GO:0005829">
    <property type="term" value="C:cytosol"/>
    <property type="evidence" value="ECO:0007669"/>
    <property type="project" value="TreeGrafter"/>
</dbReference>
<dbReference type="GO" id="GO:0005525">
    <property type="term" value="F:GTP binding"/>
    <property type="evidence" value="ECO:0007669"/>
    <property type="project" value="UniProtKB-UniRule"/>
</dbReference>
<dbReference type="GO" id="GO:0003924">
    <property type="term" value="F:GTPase activity"/>
    <property type="evidence" value="ECO:0007669"/>
    <property type="project" value="UniProtKB-UniRule"/>
</dbReference>
<dbReference type="GO" id="GO:0046872">
    <property type="term" value="F:metal ion binding"/>
    <property type="evidence" value="ECO:0007669"/>
    <property type="project" value="UniProtKB-KW"/>
</dbReference>
<dbReference type="GO" id="GO:0030488">
    <property type="term" value="P:tRNA methylation"/>
    <property type="evidence" value="ECO:0007669"/>
    <property type="project" value="TreeGrafter"/>
</dbReference>
<dbReference type="GO" id="GO:0002098">
    <property type="term" value="P:tRNA wobble uridine modification"/>
    <property type="evidence" value="ECO:0007669"/>
    <property type="project" value="TreeGrafter"/>
</dbReference>
<dbReference type="CDD" id="cd04164">
    <property type="entry name" value="trmE"/>
    <property type="match status" value="1"/>
</dbReference>
<dbReference type="CDD" id="cd14858">
    <property type="entry name" value="TrmE_N"/>
    <property type="match status" value="1"/>
</dbReference>
<dbReference type="Gene3D" id="3.40.50.300">
    <property type="entry name" value="P-loop containing nucleotide triphosphate hydrolases"/>
    <property type="match status" value="1"/>
</dbReference>
<dbReference type="Gene3D" id="3.30.1360.120">
    <property type="entry name" value="Probable tRNA modification gtpase trme, domain 1"/>
    <property type="match status" value="1"/>
</dbReference>
<dbReference type="Gene3D" id="1.20.120.430">
    <property type="entry name" value="tRNA modification GTPase MnmE domain 2"/>
    <property type="match status" value="1"/>
</dbReference>
<dbReference type="HAMAP" id="MF_00379">
    <property type="entry name" value="GTPase_MnmE"/>
    <property type="match status" value="1"/>
</dbReference>
<dbReference type="InterPro" id="IPR031168">
    <property type="entry name" value="G_TrmE"/>
</dbReference>
<dbReference type="InterPro" id="IPR006073">
    <property type="entry name" value="GTP-bd"/>
</dbReference>
<dbReference type="InterPro" id="IPR018948">
    <property type="entry name" value="GTP-bd_TrmE_N"/>
</dbReference>
<dbReference type="InterPro" id="IPR004520">
    <property type="entry name" value="GTPase_MnmE"/>
</dbReference>
<dbReference type="InterPro" id="IPR027368">
    <property type="entry name" value="MnmE_dom2"/>
</dbReference>
<dbReference type="InterPro" id="IPR025867">
    <property type="entry name" value="MnmE_helical"/>
</dbReference>
<dbReference type="InterPro" id="IPR027417">
    <property type="entry name" value="P-loop_NTPase"/>
</dbReference>
<dbReference type="InterPro" id="IPR005225">
    <property type="entry name" value="Small_GTP-bd"/>
</dbReference>
<dbReference type="InterPro" id="IPR027266">
    <property type="entry name" value="TrmE/GcvT_dom1"/>
</dbReference>
<dbReference type="NCBIfam" id="TIGR00450">
    <property type="entry name" value="mnmE_trmE_thdF"/>
    <property type="match status" value="1"/>
</dbReference>
<dbReference type="NCBIfam" id="TIGR00231">
    <property type="entry name" value="small_GTP"/>
    <property type="match status" value="1"/>
</dbReference>
<dbReference type="PANTHER" id="PTHR42714">
    <property type="entry name" value="TRNA MODIFICATION GTPASE GTPBP3"/>
    <property type="match status" value="1"/>
</dbReference>
<dbReference type="PANTHER" id="PTHR42714:SF2">
    <property type="entry name" value="TRNA MODIFICATION GTPASE GTPBP3, MITOCHONDRIAL"/>
    <property type="match status" value="1"/>
</dbReference>
<dbReference type="Pfam" id="PF01926">
    <property type="entry name" value="MMR_HSR1"/>
    <property type="match status" value="1"/>
</dbReference>
<dbReference type="Pfam" id="PF12631">
    <property type="entry name" value="MnmE_helical"/>
    <property type="match status" value="1"/>
</dbReference>
<dbReference type="Pfam" id="PF10396">
    <property type="entry name" value="TrmE_N"/>
    <property type="match status" value="1"/>
</dbReference>
<dbReference type="PRINTS" id="PR00326">
    <property type="entry name" value="GTP1OBG"/>
</dbReference>
<dbReference type="SUPFAM" id="SSF52540">
    <property type="entry name" value="P-loop containing nucleoside triphosphate hydrolases"/>
    <property type="match status" value="1"/>
</dbReference>
<dbReference type="PROSITE" id="PS51709">
    <property type="entry name" value="G_TRME"/>
    <property type="match status" value="1"/>
</dbReference>
<evidence type="ECO:0000255" key="1">
    <source>
        <dbReference type="HAMAP-Rule" id="MF_00379"/>
    </source>
</evidence>
<protein>
    <recommendedName>
        <fullName evidence="1">tRNA modification GTPase MnmE</fullName>
        <ecNumber evidence="1">3.6.-.-</ecNumber>
    </recommendedName>
</protein>
<sequence>MISSKNDDIAAIATAHGIGSICIIRLSGSTALQSALKLTKISNLSPRLATLTKIYSLDKEFLDEAIMIYFKAPASFTGEDVVEFHTHGGFVVADMILNELVKLGVRLAEPGEFSKRAFLNDKLDLAKAEAIQGLINSRSEAAAKILARQMRGDLSRYVEQMRNELVKTLAFVETSIDYADDDLPDDLLEQIKTMLEANAAKLDKIVQISEQRRGLIDGFKVAIVGKPNVGKSSILNSLLSYERAIISDEAGTTRDRIEENFKVGTHLVRIIDTAGIRKNAGKIEKIGIRYSLAAIEEADIVLAVFDSSSASDEQDERIVELVKNSGKKVFFILNKSDLAFKFDLDLSPSIKISAKKGADEIVGRLRDYLDSQDSSEMMLSSNHQIKQCKDASVAIKRALNLLGDELELFAYEINTAIAAISAITRSFERSEILDEMFSHFCLGK</sequence>